<name>RS20_SYNY3</name>
<organism>
    <name type="scientific">Synechocystis sp. (strain ATCC 27184 / PCC 6803 / Kazusa)</name>
    <dbReference type="NCBI Taxonomy" id="1111708"/>
    <lineage>
        <taxon>Bacteria</taxon>
        <taxon>Bacillati</taxon>
        <taxon>Cyanobacteriota</taxon>
        <taxon>Cyanophyceae</taxon>
        <taxon>Synechococcales</taxon>
        <taxon>Merismopediaceae</taxon>
        <taxon>Synechocystis</taxon>
    </lineage>
</organism>
<accession>P73336</accession>
<gene>
    <name evidence="1" type="primary">rpsT</name>
    <name evidence="1" type="synonym">rps20</name>
    <name type="ordered locus">ssl2233</name>
</gene>
<feature type="chain" id="PRO_0000168047" description="Small ribosomal subunit protein bS20">
    <location>
        <begin position="1"/>
        <end position="97"/>
    </location>
</feature>
<protein>
    <recommendedName>
        <fullName evidence="1">Small ribosomal subunit protein bS20</fullName>
    </recommendedName>
    <alternativeName>
        <fullName evidence="2">30S ribosomal protein S20</fullName>
    </alternativeName>
</protein>
<evidence type="ECO:0000255" key="1">
    <source>
        <dbReference type="HAMAP-Rule" id="MF_00500"/>
    </source>
</evidence>
<evidence type="ECO:0000305" key="2"/>
<sequence length="97" mass="10703">MANIKSALKRIEIAERNRLQNKSYKSAIKTLMKKTFQSVEAYASDPNPEKLDTINTSMAAAFSKIDKAVKCKVIHKNNAARKKARLAKALQSALPAA</sequence>
<proteinExistence type="inferred from homology"/>
<dbReference type="EMBL" id="BA000022">
    <property type="protein sequence ID" value="BAA17367.1"/>
    <property type="molecule type" value="Genomic_DNA"/>
</dbReference>
<dbReference type="PIR" id="S77520">
    <property type="entry name" value="S77520"/>
</dbReference>
<dbReference type="SMR" id="P73336"/>
<dbReference type="FunCoup" id="P73336">
    <property type="interactions" value="347"/>
</dbReference>
<dbReference type="STRING" id="1148.gene:10498230"/>
<dbReference type="PaxDb" id="1148-1652445"/>
<dbReference type="EnsemblBacteria" id="BAA17367">
    <property type="protein sequence ID" value="BAA17367"/>
    <property type="gene ID" value="BAA17367"/>
</dbReference>
<dbReference type="KEGG" id="syn:ssl2233"/>
<dbReference type="eggNOG" id="COG0268">
    <property type="taxonomic scope" value="Bacteria"/>
</dbReference>
<dbReference type="InParanoid" id="P73336"/>
<dbReference type="PhylomeDB" id="P73336"/>
<dbReference type="Proteomes" id="UP000001425">
    <property type="component" value="Chromosome"/>
</dbReference>
<dbReference type="GO" id="GO:0005829">
    <property type="term" value="C:cytosol"/>
    <property type="evidence" value="ECO:0000318"/>
    <property type="project" value="GO_Central"/>
</dbReference>
<dbReference type="GO" id="GO:0015935">
    <property type="term" value="C:small ribosomal subunit"/>
    <property type="evidence" value="ECO:0000318"/>
    <property type="project" value="GO_Central"/>
</dbReference>
<dbReference type="GO" id="GO:0070181">
    <property type="term" value="F:small ribosomal subunit rRNA binding"/>
    <property type="evidence" value="ECO:0000318"/>
    <property type="project" value="GO_Central"/>
</dbReference>
<dbReference type="GO" id="GO:0003735">
    <property type="term" value="F:structural constituent of ribosome"/>
    <property type="evidence" value="ECO:0007669"/>
    <property type="project" value="InterPro"/>
</dbReference>
<dbReference type="GO" id="GO:0006412">
    <property type="term" value="P:translation"/>
    <property type="evidence" value="ECO:0007669"/>
    <property type="project" value="UniProtKB-UniRule"/>
</dbReference>
<dbReference type="FunFam" id="1.20.58.110:FF:000001">
    <property type="entry name" value="30S ribosomal protein S20"/>
    <property type="match status" value="1"/>
</dbReference>
<dbReference type="Gene3D" id="1.20.58.110">
    <property type="entry name" value="Ribosomal protein S20"/>
    <property type="match status" value="1"/>
</dbReference>
<dbReference type="HAMAP" id="MF_00500">
    <property type="entry name" value="Ribosomal_bS20"/>
    <property type="match status" value="1"/>
</dbReference>
<dbReference type="InterPro" id="IPR002583">
    <property type="entry name" value="Ribosomal_bS20"/>
</dbReference>
<dbReference type="InterPro" id="IPR036510">
    <property type="entry name" value="Ribosomal_bS20_sf"/>
</dbReference>
<dbReference type="NCBIfam" id="TIGR00029">
    <property type="entry name" value="S20"/>
    <property type="match status" value="1"/>
</dbReference>
<dbReference type="PANTHER" id="PTHR33398">
    <property type="entry name" value="30S RIBOSOMAL PROTEIN S20"/>
    <property type="match status" value="1"/>
</dbReference>
<dbReference type="PANTHER" id="PTHR33398:SF1">
    <property type="entry name" value="SMALL RIBOSOMAL SUBUNIT PROTEIN BS20C"/>
    <property type="match status" value="1"/>
</dbReference>
<dbReference type="Pfam" id="PF01649">
    <property type="entry name" value="Ribosomal_S20p"/>
    <property type="match status" value="1"/>
</dbReference>
<dbReference type="SUPFAM" id="SSF46992">
    <property type="entry name" value="Ribosomal protein S20"/>
    <property type="match status" value="1"/>
</dbReference>
<comment type="function">
    <text evidence="1">Binds directly to 16S ribosomal RNA.</text>
</comment>
<comment type="similarity">
    <text evidence="1">Belongs to the bacterial ribosomal protein bS20 family.</text>
</comment>
<reference key="1">
    <citation type="journal article" date="1996" name="DNA Res.">
        <title>Sequence analysis of the genome of the unicellular cyanobacterium Synechocystis sp. strain PCC6803. II. Sequence determination of the entire genome and assignment of potential protein-coding regions.</title>
        <authorList>
            <person name="Kaneko T."/>
            <person name="Sato S."/>
            <person name="Kotani H."/>
            <person name="Tanaka A."/>
            <person name="Asamizu E."/>
            <person name="Nakamura Y."/>
            <person name="Miyajima N."/>
            <person name="Hirosawa M."/>
            <person name="Sugiura M."/>
            <person name="Sasamoto S."/>
            <person name="Kimura T."/>
            <person name="Hosouchi T."/>
            <person name="Matsuno A."/>
            <person name="Muraki A."/>
            <person name="Nakazaki N."/>
            <person name="Naruo K."/>
            <person name="Okumura S."/>
            <person name="Shimpo S."/>
            <person name="Takeuchi C."/>
            <person name="Wada T."/>
            <person name="Watanabe A."/>
            <person name="Yamada M."/>
            <person name="Yasuda M."/>
            <person name="Tabata S."/>
        </authorList>
    </citation>
    <scope>NUCLEOTIDE SEQUENCE [LARGE SCALE GENOMIC DNA]</scope>
    <source>
        <strain>ATCC 27184 / PCC 6803 / Kazusa</strain>
    </source>
</reference>
<keyword id="KW-1185">Reference proteome</keyword>
<keyword id="KW-0687">Ribonucleoprotein</keyword>
<keyword id="KW-0689">Ribosomal protein</keyword>
<keyword id="KW-0694">RNA-binding</keyword>
<keyword id="KW-0699">rRNA-binding</keyword>